<comment type="function">
    <text evidence="2 3">Na(+)/H(+) antiporter. Mediates the electoneutral exchange of intracellular H(+) ions for extracellular Na(+) in 1:1 stoichiometry. Acts as an Na(+)/H(+) exchanger in the trans-Golgi. Contributes to the regulation of pH regulation of Golgi apparatus, and consequently, in protein trafficking and endosomal morphology (By similarity). In germ cells, plays a crucial role in acrosome biogenesis and sperm development, probably by playing a role in the fusion of the Golgi-derived vesicles that form the acrosomal cap (By similarity). Can also be active at the cell surface of specialized cells. In the small intestine, at the cell membrane, plays a major physiological role in transepithelial absorption of Na(+) and regulates intracellular pH homeostasis of intestinal epithelial cells (By similarity). Acts as an important regulator of mucosal integrity in the intestine and in the stomach, could mediate the pH fluctuation necessary for mucin exocytosis or assist membrane trafficking of other proteins. Plays a role in photoreceptor survival and in the maintenance of intracellular pH homeostasis in retinal pigment epithelium (RPE cells) (By similarity).</text>
</comment>
<comment type="catalytic activity">
    <reaction evidence="3">
        <text>Na(+)(in) + H(+)(out) = Na(+)(out) + H(+)(in)</text>
        <dbReference type="Rhea" id="RHEA:29419"/>
        <dbReference type="ChEBI" id="CHEBI:15378"/>
        <dbReference type="ChEBI" id="CHEBI:29101"/>
    </reaction>
</comment>
<comment type="subcellular location">
    <subcellularLocation>
        <location evidence="3">Golgi apparatus membrane</location>
        <topology evidence="4">Multi-pass membrane protein</topology>
    </subcellularLocation>
    <subcellularLocation>
        <location evidence="3">Golgi apparatus</location>
        <location evidence="3">trans-Golgi network membrane</location>
        <topology evidence="4">Multi-pass membrane protein</topology>
    </subcellularLocation>
    <subcellularLocation>
        <location evidence="3">Endosome</location>
        <location evidence="3">Multivesicular body membrane</location>
        <topology evidence="4">Multi-pass membrane protein</topology>
    </subcellularLocation>
    <subcellularLocation>
        <location evidence="3">Apical cell membrane</location>
        <topology evidence="4">Multi-pass membrane protein</topology>
    </subcellularLocation>
    <subcellularLocation>
        <location evidence="2">Cytoplasmic vesicle</location>
        <location evidence="2">Secretory vesicle</location>
        <location evidence="2">Acrosome</location>
    </subcellularLocation>
    <text evidence="1 3">Intracellular versus plasma membrane-resident location may vary with cell type. Mainly localized to the mid- to trans-Golgi compartments but a proportion is also localized to multivesicular bodies (By similarity). Localized at the apical membrane of polarized gastrointestinal epithelial cells (By similarity). Recruitment to the plasma membrane upon acid stimulation (By similarity).</text>
</comment>
<comment type="similarity">
    <text evidence="5">Belongs to the monovalent cation:proton antiporter 1 (CPA1) transporter (TC 2.A.36) family.</text>
</comment>
<organism>
    <name type="scientific">Macaca fascicularis</name>
    <name type="common">Crab-eating macaque</name>
    <name type="synonym">Cynomolgus monkey</name>
    <dbReference type="NCBI Taxonomy" id="9541"/>
    <lineage>
        <taxon>Eukaryota</taxon>
        <taxon>Metazoa</taxon>
        <taxon>Chordata</taxon>
        <taxon>Craniata</taxon>
        <taxon>Vertebrata</taxon>
        <taxon>Euteleostomi</taxon>
        <taxon>Mammalia</taxon>
        <taxon>Eutheria</taxon>
        <taxon>Euarchontoglires</taxon>
        <taxon>Primates</taxon>
        <taxon>Haplorrhini</taxon>
        <taxon>Catarrhini</taxon>
        <taxon>Cercopithecidae</taxon>
        <taxon>Cercopithecinae</taxon>
        <taxon>Macaca</taxon>
    </lineage>
</organism>
<keyword id="KW-0050">Antiport</keyword>
<keyword id="KW-1003">Cell membrane</keyword>
<keyword id="KW-0968">Cytoplasmic vesicle</keyword>
<keyword id="KW-0221">Differentiation</keyword>
<keyword id="KW-0967">Endosome</keyword>
<keyword id="KW-0333">Golgi apparatus</keyword>
<keyword id="KW-0406">Ion transport</keyword>
<keyword id="KW-0472">Membrane</keyword>
<keyword id="KW-0597">Phosphoprotein</keyword>
<keyword id="KW-1185">Reference proteome</keyword>
<keyword id="KW-0915">Sodium</keyword>
<keyword id="KW-0739">Sodium transport</keyword>
<keyword id="KW-0744">Spermatogenesis</keyword>
<keyword id="KW-0812">Transmembrane</keyword>
<keyword id="KW-1133">Transmembrane helix</keyword>
<keyword id="KW-0813">Transport</keyword>
<accession>Q4R8V4</accession>
<gene>
    <name type="primary">SLC9A8</name>
    <name type="synonym">NHE8</name>
    <name type="ORF">QtsA-11355</name>
</gene>
<protein>
    <recommendedName>
        <fullName>Sodium/hydrogen exchanger 8</fullName>
    </recommendedName>
    <alternativeName>
        <fullName>Na(+)/H(+) exchanger 8</fullName>
        <shortName>NHE-8</shortName>
    </alternativeName>
    <alternativeName>
        <fullName>Solute carrier family 9 member 8</fullName>
    </alternativeName>
</protein>
<proteinExistence type="evidence at transcript level"/>
<evidence type="ECO:0000250" key="1">
    <source>
        <dbReference type="UniProtKB" id="Q4L208"/>
    </source>
</evidence>
<evidence type="ECO:0000250" key="2">
    <source>
        <dbReference type="UniProtKB" id="Q8R4D1"/>
    </source>
</evidence>
<evidence type="ECO:0000250" key="3">
    <source>
        <dbReference type="UniProtKB" id="Q9Y2E8"/>
    </source>
</evidence>
<evidence type="ECO:0000255" key="4"/>
<evidence type="ECO:0000305" key="5"/>
<feature type="chain" id="PRO_0000379802" description="Sodium/hydrogen exchanger 8">
    <location>
        <begin position="1"/>
        <end position="542"/>
    </location>
</feature>
<feature type="transmembrane region" description="Helical" evidence="4">
    <location>
        <begin position="55"/>
        <end position="75"/>
    </location>
</feature>
<feature type="transmembrane region" description="Helical" evidence="4">
    <location>
        <begin position="79"/>
        <end position="99"/>
    </location>
</feature>
<feature type="transmembrane region" description="Helical" evidence="4">
    <location>
        <begin position="118"/>
        <end position="138"/>
    </location>
</feature>
<feature type="transmembrane region" description="Helical" evidence="4">
    <location>
        <begin position="151"/>
        <end position="171"/>
    </location>
</feature>
<feature type="transmembrane region" description="Helical" evidence="4">
    <location>
        <begin position="186"/>
        <end position="206"/>
    </location>
</feature>
<feature type="transmembrane region" description="Helical" evidence="4">
    <location>
        <begin position="256"/>
        <end position="276"/>
    </location>
</feature>
<feature type="transmembrane region" description="Helical" evidence="4">
    <location>
        <begin position="306"/>
        <end position="326"/>
    </location>
</feature>
<feature type="transmembrane region" description="Helical" evidence="4">
    <location>
        <begin position="349"/>
        <end position="369"/>
    </location>
</feature>
<feature type="transmembrane region" description="Helical" evidence="4">
    <location>
        <begin position="374"/>
        <end position="394"/>
    </location>
</feature>
<feature type="transmembrane region" description="Helical" evidence="4">
    <location>
        <begin position="412"/>
        <end position="432"/>
    </location>
</feature>
<feature type="transmembrane region" description="Helical" evidence="4">
    <location>
        <begin position="446"/>
        <end position="466"/>
    </location>
</feature>
<feature type="modified residue" description="Phosphothreonine" evidence="2">
    <location>
        <position position="471"/>
    </location>
</feature>
<feature type="modified residue" description="Phosphoserine" evidence="3">
    <location>
        <position position="532"/>
    </location>
</feature>
<feature type="modified residue" description="Phosphoserine" evidence="3">
    <location>
        <position position="534"/>
    </location>
</feature>
<name>SL9A8_MACFA</name>
<reference key="1">
    <citation type="submission" date="2005-06" db="EMBL/GenBank/DDBJ databases">
        <title>DNA sequences of macaque genes expressed in brain or testis and its evolutionary implications.</title>
        <authorList>
            <consortium name="International consortium for macaque cDNA sequencing and analysis"/>
        </authorList>
    </citation>
    <scope>NUCLEOTIDE SEQUENCE [LARGE SCALE MRNA]</scope>
</reference>
<sequence length="542" mass="61118">MGEKMAEEERFPNTTHEGFNVTLHTTLVVTTKLVLPTPGKPILPVQTGEQAQQEEQSSGMTIFFSLLVLAICIILVHLLIRYRLHFLPESVAVVSLGILMGAVIKIIEFKKLANWKEEEMFRPNMFFLLLLPPIIFESGYSLHKGNFFQNIGSITLFAVFGTAISAFVVGGGIYFLGQADVISKLNMTDSFAFGSLISAVDPVATIAIFNALHVDPVLNMLVFGESILNDAVSIVLTNTAEGLTRKNMSDVSGWQTFLQALDYFLKMFFGSAALGTLTGLISALVLKHIDLRKTPSLEFGMMIIFAYLPYGLAEGISLSETCVFAFLGLSIFSFPHKFEISFVIWCIVLVLFGRAVNIFPLSYLLNFFRDHKITPKMMFIMWFSGLRGAIPYALSLHLDLEPMEKRQLIGTTTIVIVLFTILLLGGSTMPLIRLMDIEDAKARRRNKKDVNLSKTEKMGNTVESEHLSELTEEEYEAHYIRRQDLKGFMWLDAKYLNPFFTRRLTQEDLHHGRIQMKTLTNKWYEEVRQGPSGSEDDEQELL</sequence>
<dbReference type="EMBL" id="AB168343">
    <property type="protein sequence ID" value="BAE00467.1"/>
    <property type="molecule type" value="mRNA"/>
</dbReference>
<dbReference type="RefSeq" id="NP_001270304.1">
    <property type="nucleotide sequence ID" value="NM_001283375.1"/>
</dbReference>
<dbReference type="RefSeq" id="XP_065379358.1">
    <property type="nucleotide sequence ID" value="XM_065523286.1"/>
</dbReference>
<dbReference type="SMR" id="Q4R8V4"/>
<dbReference type="STRING" id="9541.ENSMFAP00000004763"/>
<dbReference type="Ensembl" id="ENSMFAT00000023434.2">
    <property type="protein sequence ID" value="ENSMFAP00000004768.2"/>
    <property type="gene ID" value="ENSMFAG00000002040.2"/>
</dbReference>
<dbReference type="GeneID" id="101865258"/>
<dbReference type="GeneTree" id="ENSGT00940000157210"/>
<dbReference type="Proteomes" id="UP000233100">
    <property type="component" value="Chromosome 10"/>
</dbReference>
<dbReference type="Bgee" id="ENSMFAG00000002040">
    <property type="expression patterns" value="Expressed in liver and 13 other cell types or tissues"/>
</dbReference>
<dbReference type="GO" id="GO:0001669">
    <property type="term" value="C:acrosomal vesicle"/>
    <property type="evidence" value="ECO:0000250"/>
    <property type="project" value="UniProtKB"/>
</dbReference>
<dbReference type="GO" id="GO:0016324">
    <property type="term" value="C:apical plasma membrane"/>
    <property type="evidence" value="ECO:0000250"/>
    <property type="project" value="UniProtKB"/>
</dbReference>
<dbReference type="GO" id="GO:0000139">
    <property type="term" value="C:Golgi membrane"/>
    <property type="evidence" value="ECO:0000250"/>
    <property type="project" value="UniProtKB"/>
</dbReference>
<dbReference type="GO" id="GO:0032585">
    <property type="term" value="C:multivesicular body membrane"/>
    <property type="evidence" value="ECO:0000250"/>
    <property type="project" value="UniProtKB"/>
</dbReference>
<dbReference type="GO" id="GO:0032588">
    <property type="term" value="C:trans-Golgi network membrane"/>
    <property type="evidence" value="ECO:0000250"/>
    <property type="project" value="UniProtKB"/>
</dbReference>
<dbReference type="GO" id="GO:0015386">
    <property type="term" value="F:potassium:proton antiporter activity"/>
    <property type="evidence" value="ECO:0007669"/>
    <property type="project" value="TreeGrafter"/>
</dbReference>
<dbReference type="GO" id="GO:0015385">
    <property type="term" value="F:sodium:proton antiporter activity"/>
    <property type="evidence" value="ECO:0000250"/>
    <property type="project" value="UniProtKB"/>
</dbReference>
<dbReference type="GO" id="GO:0001675">
    <property type="term" value="P:acrosome assembly"/>
    <property type="evidence" value="ECO:0000250"/>
    <property type="project" value="UniProtKB"/>
</dbReference>
<dbReference type="GO" id="GO:1902600">
    <property type="term" value="P:proton transmembrane transport"/>
    <property type="evidence" value="ECO:0000250"/>
    <property type="project" value="UniProtKB"/>
</dbReference>
<dbReference type="GO" id="GO:1905526">
    <property type="term" value="P:regulation of Golgi lumen acidification"/>
    <property type="evidence" value="ECO:0000250"/>
    <property type="project" value="UniProtKB"/>
</dbReference>
<dbReference type="GO" id="GO:0051453">
    <property type="term" value="P:regulation of intracellular pH"/>
    <property type="evidence" value="ECO:0000250"/>
    <property type="project" value="UniProtKB"/>
</dbReference>
<dbReference type="GO" id="GO:0035725">
    <property type="term" value="P:sodium ion transmembrane transport"/>
    <property type="evidence" value="ECO:0000250"/>
    <property type="project" value="UniProtKB"/>
</dbReference>
<dbReference type="Gene3D" id="6.10.140.1330">
    <property type="match status" value="1"/>
</dbReference>
<dbReference type="InterPro" id="IPR018422">
    <property type="entry name" value="Cation/H_exchanger_CPA1"/>
</dbReference>
<dbReference type="InterPro" id="IPR006153">
    <property type="entry name" value="Cation/H_exchanger_TM"/>
</dbReference>
<dbReference type="InterPro" id="IPR004709">
    <property type="entry name" value="NaH_exchanger"/>
</dbReference>
<dbReference type="PANTHER" id="PTHR10110">
    <property type="entry name" value="SODIUM/HYDROGEN EXCHANGER"/>
    <property type="match status" value="1"/>
</dbReference>
<dbReference type="PANTHER" id="PTHR10110:SF191">
    <property type="entry name" value="SODIUM_HYDROGEN EXCHANGER 8"/>
    <property type="match status" value="1"/>
</dbReference>
<dbReference type="Pfam" id="PF00999">
    <property type="entry name" value="Na_H_Exchanger"/>
    <property type="match status" value="1"/>
</dbReference>
<dbReference type="PRINTS" id="PR01084">
    <property type="entry name" value="NAHEXCHNGR"/>
</dbReference>